<name>GCH1_ALIF1</name>
<reference key="1">
    <citation type="journal article" date="2005" name="Proc. Natl. Acad. Sci. U.S.A.">
        <title>Complete genome sequence of Vibrio fischeri: a symbiotic bacterium with pathogenic congeners.</title>
        <authorList>
            <person name="Ruby E.G."/>
            <person name="Urbanowski M."/>
            <person name="Campbell J."/>
            <person name="Dunn A."/>
            <person name="Faini M."/>
            <person name="Gunsalus R."/>
            <person name="Lostroh P."/>
            <person name="Lupp C."/>
            <person name="McCann J."/>
            <person name="Millikan D."/>
            <person name="Schaefer A."/>
            <person name="Stabb E."/>
            <person name="Stevens A."/>
            <person name="Visick K."/>
            <person name="Whistler C."/>
            <person name="Greenberg E.P."/>
        </authorList>
    </citation>
    <scope>NUCLEOTIDE SEQUENCE [LARGE SCALE GENOMIC DNA]</scope>
    <source>
        <strain>ATCC 700601 / ES114</strain>
    </source>
</reference>
<evidence type="ECO:0000250" key="1"/>
<evidence type="ECO:0000255" key="2">
    <source>
        <dbReference type="HAMAP-Rule" id="MF_00223"/>
    </source>
</evidence>
<dbReference type="EC" id="3.5.4.16" evidence="2"/>
<dbReference type="EMBL" id="CP000020">
    <property type="protein sequence ID" value="AAW86102.1"/>
    <property type="molecule type" value="Genomic_DNA"/>
</dbReference>
<dbReference type="RefSeq" id="WP_005419880.1">
    <property type="nucleotide sequence ID" value="NZ_CAWLES010000001.1"/>
</dbReference>
<dbReference type="RefSeq" id="YP_204990.1">
    <property type="nucleotide sequence ID" value="NC_006840.2"/>
</dbReference>
<dbReference type="SMR" id="Q5E4E4"/>
<dbReference type="STRING" id="312309.VF_1607"/>
<dbReference type="EnsemblBacteria" id="AAW86102">
    <property type="protein sequence ID" value="AAW86102"/>
    <property type="gene ID" value="VF_1607"/>
</dbReference>
<dbReference type="GeneID" id="54164293"/>
<dbReference type="KEGG" id="vfi:VF_1607"/>
<dbReference type="PATRIC" id="fig|312309.11.peg.1628"/>
<dbReference type="eggNOG" id="COG0302">
    <property type="taxonomic scope" value="Bacteria"/>
</dbReference>
<dbReference type="HOGENOM" id="CLU_049768_3_2_6"/>
<dbReference type="OrthoDB" id="9801207at2"/>
<dbReference type="UniPathway" id="UPA00848">
    <property type="reaction ID" value="UER00151"/>
</dbReference>
<dbReference type="Proteomes" id="UP000000537">
    <property type="component" value="Chromosome I"/>
</dbReference>
<dbReference type="GO" id="GO:0005737">
    <property type="term" value="C:cytoplasm"/>
    <property type="evidence" value="ECO:0007669"/>
    <property type="project" value="TreeGrafter"/>
</dbReference>
<dbReference type="GO" id="GO:0005525">
    <property type="term" value="F:GTP binding"/>
    <property type="evidence" value="ECO:0007669"/>
    <property type="project" value="UniProtKB-KW"/>
</dbReference>
<dbReference type="GO" id="GO:0003934">
    <property type="term" value="F:GTP cyclohydrolase I activity"/>
    <property type="evidence" value="ECO:0007669"/>
    <property type="project" value="UniProtKB-UniRule"/>
</dbReference>
<dbReference type="GO" id="GO:0008270">
    <property type="term" value="F:zinc ion binding"/>
    <property type="evidence" value="ECO:0007669"/>
    <property type="project" value="UniProtKB-UniRule"/>
</dbReference>
<dbReference type="GO" id="GO:0006730">
    <property type="term" value="P:one-carbon metabolic process"/>
    <property type="evidence" value="ECO:0007669"/>
    <property type="project" value="UniProtKB-UniRule"/>
</dbReference>
<dbReference type="GO" id="GO:0006729">
    <property type="term" value="P:tetrahydrobiopterin biosynthetic process"/>
    <property type="evidence" value="ECO:0007669"/>
    <property type="project" value="TreeGrafter"/>
</dbReference>
<dbReference type="GO" id="GO:0046654">
    <property type="term" value="P:tetrahydrofolate biosynthetic process"/>
    <property type="evidence" value="ECO:0007669"/>
    <property type="project" value="UniProtKB-UniRule"/>
</dbReference>
<dbReference type="FunFam" id="1.10.286.10:FF:000002">
    <property type="entry name" value="GTP cyclohydrolase 1"/>
    <property type="match status" value="1"/>
</dbReference>
<dbReference type="FunFam" id="3.30.1130.10:FF:000001">
    <property type="entry name" value="GTP cyclohydrolase 1"/>
    <property type="match status" value="1"/>
</dbReference>
<dbReference type="Gene3D" id="1.10.286.10">
    <property type="match status" value="1"/>
</dbReference>
<dbReference type="Gene3D" id="3.30.1130.10">
    <property type="match status" value="1"/>
</dbReference>
<dbReference type="HAMAP" id="MF_00223">
    <property type="entry name" value="FolE"/>
    <property type="match status" value="1"/>
</dbReference>
<dbReference type="InterPro" id="IPR043133">
    <property type="entry name" value="GTP-CH-I_C/QueF"/>
</dbReference>
<dbReference type="InterPro" id="IPR043134">
    <property type="entry name" value="GTP-CH-I_N"/>
</dbReference>
<dbReference type="InterPro" id="IPR001474">
    <property type="entry name" value="GTP_CycHdrlase_I"/>
</dbReference>
<dbReference type="InterPro" id="IPR018234">
    <property type="entry name" value="GTP_CycHdrlase_I_CS"/>
</dbReference>
<dbReference type="InterPro" id="IPR020602">
    <property type="entry name" value="GTP_CycHdrlase_I_dom"/>
</dbReference>
<dbReference type="NCBIfam" id="TIGR00063">
    <property type="entry name" value="folE"/>
    <property type="match status" value="1"/>
</dbReference>
<dbReference type="NCBIfam" id="NF006824">
    <property type="entry name" value="PRK09347.1-1"/>
    <property type="match status" value="1"/>
</dbReference>
<dbReference type="NCBIfam" id="NF006825">
    <property type="entry name" value="PRK09347.1-2"/>
    <property type="match status" value="1"/>
</dbReference>
<dbReference type="NCBIfam" id="NF006826">
    <property type="entry name" value="PRK09347.1-3"/>
    <property type="match status" value="1"/>
</dbReference>
<dbReference type="PANTHER" id="PTHR11109:SF7">
    <property type="entry name" value="GTP CYCLOHYDROLASE 1"/>
    <property type="match status" value="1"/>
</dbReference>
<dbReference type="PANTHER" id="PTHR11109">
    <property type="entry name" value="GTP CYCLOHYDROLASE I"/>
    <property type="match status" value="1"/>
</dbReference>
<dbReference type="Pfam" id="PF01227">
    <property type="entry name" value="GTP_cyclohydroI"/>
    <property type="match status" value="1"/>
</dbReference>
<dbReference type="SUPFAM" id="SSF55620">
    <property type="entry name" value="Tetrahydrobiopterin biosynthesis enzymes-like"/>
    <property type="match status" value="1"/>
</dbReference>
<dbReference type="PROSITE" id="PS00859">
    <property type="entry name" value="GTP_CYCLOHYDROL_1_1"/>
    <property type="match status" value="1"/>
</dbReference>
<dbReference type="PROSITE" id="PS00860">
    <property type="entry name" value="GTP_CYCLOHYDROL_1_2"/>
    <property type="match status" value="1"/>
</dbReference>
<gene>
    <name evidence="2" type="primary">folE</name>
    <name type="ordered locus">VF_1607</name>
</gene>
<feature type="chain" id="PRO_1000043756" description="GTP cyclohydrolase 1">
    <location>
        <begin position="1"/>
        <end position="217"/>
    </location>
</feature>
<feature type="binding site" evidence="2">
    <location>
        <position position="109"/>
    </location>
    <ligand>
        <name>Zn(2+)</name>
        <dbReference type="ChEBI" id="CHEBI:29105"/>
    </ligand>
</feature>
<feature type="binding site" evidence="2">
    <location>
        <position position="112"/>
    </location>
    <ligand>
        <name>Zn(2+)</name>
        <dbReference type="ChEBI" id="CHEBI:29105"/>
    </ligand>
</feature>
<feature type="binding site" evidence="2">
    <location>
        <position position="180"/>
    </location>
    <ligand>
        <name>Zn(2+)</name>
        <dbReference type="ChEBI" id="CHEBI:29105"/>
    </ligand>
</feature>
<accession>Q5E4E4</accession>
<organism>
    <name type="scientific">Aliivibrio fischeri (strain ATCC 700601 / ES114)</name>
    <name type="common">Vibrio fischeri</name>
    <dbReference type="NCBI Taxonomy" id="312309"/>
    <lineage>
        <taxon>Bacteria</taxon>
        <taxon>Pseudomonadati</taxon>
        <taxon>Pseudomonadota</taxon>
        <taxon>Gammaproteobacteria</taxon>
        <taxon>Vibrionales</taxon>
        <taxon>Vibrionaceae</taxon>
        <taxon>Aliivibrio</taxon>
    </lineage>
</organism>
<keyword id="KW-0342">GTP-binding</keyword>
<keyword id="KW-0378">Hydrolase</keyword>
<keyword id="KW-0479">Metal-binding</keyword>
<keyword id="KW-0547">Nucleotide-binding</keyword>
<keyword id="KW-0554">One-carbon metabolism</keyword>
<keyword id="KW-1185">Reference proteome</keyword>
<keyword id="KW-0862">Zinc</keyword>
<comment type="catalytic activity">
    <reaction evidence="2">
        <text>GTP + H2O = 7,8-dihydroneopterin 3'-triphosphate + formate + H(+)</text>
        <dbReference type="Rhea" id="RHEA:17473"/>
        <dbReference type="ChEBI" id="CHEBI:15377"/>
        <dbReference type="ChEBI" id="CHEBI:15378"/>
        <dbReference type="ChEBI" id="CHEBI:15740"/>
        <dbReference type="ChEBI" id="CHEBI:37565"/>
        <dbReference type="ChEBI" id="CHEBI:58462"/>
        <dbReference type="EC" id="3.5.4.16"/>
    </reaction>
</comment>
<comment type="pathway">
    <text evidence="2">Cofactor biosynthesis; 7,8-dihydroneopterin triphosphate biosynthesis; 7,8-dihydroneopterin triphosphate from GTP: step 1/1.</text>
</comment>
<comment type="subunit">
    <text evidence="1">Toroid-shaped homodecamer, composed of two pentamers of five dimers.</text>
</comment>
<comment type="similarity">
    <text evidence="2">Belongs to the GTP cyclohydrolase I family.</text>
</comment>
<protein>
    <recommendedName>
        <fullName evidence="2">GTP cyclohydrolase 1</fullName>
        <ecNumber evidence="2">3.5.4.16</ecNumber>
    </recommendedName>
    <alternativeName>
        <fullName evidence="2">GTP cyclohydrolase I</fullName>
        <shortName evidence="2">GTP-CH-I</shortName>
    </alternativeName>
</protein>
<proteinExistence type="inferred from homology"/>
<sequence>MSSLSESAILVRDALVARGLETPMKENGVSREEKKERIEEHMREILTLLSLDLSDDSLEETPHRIAKMYVDEIFSGLDYANFPKITVIENKMNCDEMVRVNDITLTSTCEHHLVTIDGKATVAYIPRGKIIGLSKINRIVRFFAQRPQVQERMTQQILVALQTLLGSDDVAITMEATHYCVKSRGVMDATSSTTTTALGGIFKRNPATRHEFLSGIR</sequence>